<organism>
    <name type="scientific">Synechocystis sp. (strain ATCC 27184 / PCC 6803 / Kazusa)</name>
    <dbReference type="NCBI Taxonomy" id="1111708"/>
    <lineage>
        <taxon>Bacteria</taxon>
        <taxon>Bacillati</taxon>
        <taxon>Cyanobacteriota</taxon>
        <taxon>Cyanophyceae</taxon>
        <taxon>Synechococcales</taxon>
        <taxon>Merismopediaceae</taxon>
        <taxon>Synechocystis</taxon>
    </lineage>
</organism>
<gene>
    <name type="ordered locus">sll1547</name>
</gene>
<keyword id="KW-0963">Cytoplasm</keyword>
<keyword id="KW-0378">Hydrolase</keyword>
<keyword id="KW-0540">Nuclease</keyword>
<keyword id="KW-1185">Reference proteome</keyword>
<keyword id="KW-0690">Ribosome biogenesis</keyword>
<protein>
    <recommendedName>
        <fullName evidence="1">Putative pre-16S rRNA nuclease</fullName>
        <ecNumber evidence="1">3.1.-.-</ecNumber>
    </recommendedName>
</protein>
<reference key="1">
    <citation type="journal article" date="1996" name="DNA Res.">
        <title>Sequence analysis of the genome of the unicellular cyanobacterium Synechocystis sp. strain PCC6803. II. Sequence determination of the entire genome and assignment of potential protein-coding regions.</title>
        <authorList>
            <person name="Kaneko T."/>
            <person name="Sato S."/>
            <person name="Kotani H."/>
            <person name="Tanaka A."/>
            <person name="Asamizu E."/>
            <person name="Nakamura Y."/>
            <person name="Miyajima N."/>
            <person name="Hirosawa M."/>
            <person name="Sugiura M."/>
            <person name="Sasamoto S."/>
            <person name="Kimura T."/>
            <person name="Hosouchi T."/>
            <person name="Matsuno A."/>
            <person name="Muraki A."/>
            <person name="Nakazaki N."/>
            <person name="Naruo K."/>
            <person name="Okumura S."/>
            <person name="Shimpo S."/>
            <person name="Takeuchi C."/>
            <person name="Wada T."/>
            <person name="Watanabe A."/>
            <person name="Yamada M."/>
            <person name="Yasuda M."/>
            <person name="Tabata S."/>
        </authorList>
    </citation>
    <scope>NUCLEOTIDE SEQUENCE [LARGE SCALE GENOMIC DNA]</scope>
    <source>
        <strain>ATCC 27184 / PCC 6803 / Kazusa</strain>
    </source>
</reference>
<proteinExistence type="inferred from homology"/>
<sequence>MSKKVAALGLDVGRKRIGVAGCDGTGLIATGITTIVRSSYDQDIAQIKQLVEERNVNLLVVGLPYTMAGEIGSQAKQVQKFARRVAEQLHLPLEYMDERLSSVEAENQLKARKRFSSYDKGLIDQQAAEIILQQWLDLRRSHLQEGGDNLHR</sequence>
<dbReference type="EC" id="3.1.-.-" evidence="1"/>
<dbReference type="EMBL" id="BA000022">
    <property type="protein sequence ID" value="BAA18780.1"/>
    <property type="molecule type" value="Genomic_DNA"/>
</dbReference>
<dbReference type="PIR" id="S76868">
    <property type="entry name" value="S76868"/>
</dbReference>
<dbReference type="SMR" id="P74662"/>
<dbReference type="FunCoup" id="P74662">
    <property type="interactions" value="298"/>
</dbReference>
<dbReference type="IntAct" id="P74662">
    <property type="interactions" value="1"/>
</dbReference>
<dbReference type="STRING" id="1148.gene:10500552"/>
<dbReference type="PaxDb" id="1148-1653870"/>
<dbReference type="EnsemblBacteria" id="BAA18780">
    <property type="protein sequence ID" value="BAA18780"/>
    <property type="gene ID" value="BAA18780"/>
</dbReference>
<dbReference type="KEGG" id="syn:sll1547"/>
<dbReference type="eggNOG" id="COG0816">
    <property type="taxonomic scope" value="Bacteria"/>
</dbReference>
<dbReference type="InParanoid" id="P74662"/>
<dbReference type="PhylomeDB" id="P74662"/>
<dbReference type="Proteomes" id="UP000001425">
    <property type="component" value="Chromosome"/>
</dbReference>
<dbReference type="GO" id="GO:0005737">
    <property type="term" value="C:cytoplasm"/>
    <property type="evidence" value="ECO:0007669"/>
    <property type="project" value="UniProtKB-SubCell"/>
</dbReference>
<dbReference type="GO" id="GO:0004518">
    <property type="term" value="F:nuclease activity"/>
    <property type="evidence" value="ECO:0007669"/>
    <property type="project" value="UniProtKB-KW"/>
</dbReference>
<dbReference type="GO" id="GO:0000967">
    <property type="term" value="P:rRNA 5'-end processing"/>
    <property type="evidence" value="ECO:0000318"/>
    <property type="project" value="GO_Central"/>
</dbReference>
<dbReference type="CDD" id="cd16964">
    <property type="entry name" value="YqgF"/>
    <property type="match status" value="1"/>
</dbReference>
<dbReference type="FunFam" id="3.30.420.140:FF:000005">
    <property type="entry name" value="Putative pre-16S rRNA nuclease"/>
    <property type="match status" value="1"/>
</dbReference>
<dbReference type="Gene3D" id="3.30.420.140">
    <property type="entry name" value="YqgF/RNase H-like domain"/>
    <property type="match status" value="1"/>
</dbReference>
<dbReference type="HAMAP" id="MF_00651">
    <property type="entry name" value="Nuclease_YqgF"/>
    <property type="match status" value="1"/>
</dbReference>
<dbReference type="InterPro" id="IPR012337">
    <property type="entry name" value="RNaseH-like_sf"/>
</dbReference>
<dbReference type="InterPro" id="IPR005227">
    <property type="entry name" value="YqgF"/>
</dbReference>
<dbReference type="InterPro" id="IPR006641">
    <property type="entry name" value="YqgF/RNaseH-like_dom"/>
</dbReference>
<dbReference type="InterPro" id="IPR037027">
    <property type="entry name" value="YqgF/RNaseH-like_dom_sf"/>
</dbReference>
<dbReference type="NCBIfam" id="TIGR00250">
    <property type="entry name" value="RNAse_H_YqgF"/>
    <property type="match status" value="1"/>
</dbReference>
<dbReference type="PANTHER" id="PTHR33317">
    <property type="entry name" value="POLYNUCLEOTIDYL TRANSFERASE, RIBONUCLEASE H-LIKE SUPERFAMILY PROTEIN"/>
    <property type="match status" value="1"/>
</dbReference>
<dbReference type="PANTHER" id="PTHR33317:SF4">
    <property type="entry name" value="POLYNUCLEOTIDYL TRANSFERASE, RIBONUCLEASE H-LIKE SUPERFAMILY PROTEIN"/>
    <property type="match status" value="1"/>
</dbReference>
<dbReference type="Pfam" id="PF03652">
    <property type="entry name" value="RuvX"/>
    <property type="match status" value="1"/>
</dbReference>
<dbReference type="SMART" id="SM00732">
    <property type="entry name" value="YqgFc"/>
    <property type="match status" value="1"/>
</dbReference>
<dbReference type="SUPFAM" id="SSF53098">
    <property type="entry name" value="Ribonuclease H-like"/>
    <property type="match status" value="1"/>
</dbReference>
<feature type="chain" id="PRO_0000172161" description="Putative pre-16S rRNA nuclease">
    <location>
        <begin position="1"/>
        <end position="152"/>
    </location>
</feature>
<evidence type="ECO:0000255" key="1">
    <source>
        <dbReference type="HAMAP-Rule" id="MF_00651"/>
    </source>
</evidence>
<accession>P74662</accession>
<comment type="function">
    <text evidence="1">Could be a nuclease involved in processing of the 5'-end of pre-16S rRNA.</text>
</comment>
<comment type="subcellular location">
    <subcellularLocation>
        <location evidence="1">Cytoplasm</location>
    </subcellularLocation>
</comment>
<comment type="similarity">
    <text evidence="1">Belongs to the YqgF nuclease family.</text>
</comment>
<name>YQGF_SYNY3</name>